<accession>B7K660</accession>
<sequence length="366" mass="39966">MSIIIPVKLPHTSYNIAIAPGSLSQLGSHLEPLKLGQKILIISNPEIFNYYGDVVVNSLKKSGFEVFTHLIPAGEAYKTLDSIAQVYDTALEHRLERSSTMIALGGGVIGDMTGFAAATWLRGINFVQVPTSLLAMVDASIGGKTGVNHPQGKNLIGAFYQPRLVFIDPSVLKTLPVREFRAGMAEVIKYGIIWDKALFEQLEQAKTLDHLNSLNDELLQTIITRSCQAKVDVVSQDEKESGLRAILNYGHTIGHAIESLTGYETINHGEAVAMGMVAAGKIAIKLSLWTQEETIRQDQLIDKVGLISTIPKTLDIDQVIESLQSDKKVKSGKVRFILPTSIGKVIISDQVSSEIIKSVMIHQVNK</sequence>
<name>AROB_RIPO1</name>
<feature type="chain" id="PRO_1000117481" description="3-dehydroquinate synthase">
    <location>
        <begin position="1"/>
        <end position="366"/>
    </location>
</feature>
<feature type="binding site" evidence="1">
    <location>
        <begin position="107"/>
        <end position="111"/>
    </location>
    <ligand>
        <name>NAD(+)</name>
        <dbReference type="ChEBI" id="CHEBI:57540"/>
    </ligand>
</feature>
<feature type="binding site" evidence="1">
    <location>
        <begin position="131"/>
        <end position="132"/>
    </location>
    <ligand>
        <name>NAD(+)</name>
        <dbReference type="ChEBI" id="CHEBI:57540"/>
    </ligand>
</feature>
<feature type="binding site" evidence="1">
    <location>
        <position position="144"/>
    </location>
    <ligand>
        <name>NAD(+)</name>
        <dbReference type="ChEBI" id="CHEBI:57540"/>
    </ligand>
</feature>
<feature type="binding site" evidence="1">
    <location>
        <position position="153"/>
    </location>
    <ligand>
        <name>NAD(+)</name>
        <dbReference type="ChEBI" id="CHEBI:57540"/>
    </ligand>
</feature>
<feature type="binding site" evidence="1">
    <location>
        <position position="186"/>
    </location>
    <ligand>
        <name>Zn(2+)</name>
        <dbReference type="ChEBI" id="CHEBI:29105"/>
    </ligand>
</feature>
<feature type="binding site" evidence="1">
    <location>
        <position position="251"/>
    </location>
    <ligand>
        <name>Zn(2+)</name>
        <dbReference type="ChEBI" id="CHEBI:29105"/>
    </ligand>
</feature>
<feature type="binding site" evidence="1">
    <location>
        <position position="268"/>
    </location>
    <ligand>
        <name>Zn(2+)</name>
        <dbReference type="ChEBI" id="CHEBI:29105"/>
    </ligand>
</feature>
<evidence type="ECO:0000255" key="1">
    <source>
        <dbReference type="HAMAP-Rule" id="MF_00110"/>
    </source>
</evidence>
<protein>
    <recommendedName>
        <fullName evidence="1">3-dehydroquinate synthase</fullName>
        <shortName evidence="1">DHQS</shortName>
        <ecNumber evidence="1">4.2.3.4</ecNumber>
    </recommendedName>
</protein>
<organism>
    <name type="scientific">Rippkaea orientalis (strain PCC 8801 / RF-1)</name>
    <name type="common">Cyanothece sp. (strain PCC 8801)</name>
    <dbReference type="NCBI Taxonomy" id="41431"/>
    <lineage>
        <taxon>Bacteria</taxon>
        <taxon>Bacillati</taxon>
        <taxon>Cyanobacteriota</taxon>
        <taxon>Cyanophyceae</taxon>
        <taxon>Oscillatoriophycideae</taxon>
        <taxon>Chroococcales</taxon>
        <taxon>Aphanothecaceae</taxon>
        <taxon>Rippkaea</taxon>
        <taxon>Rippkaea orientalis</taxon>
    </lineage>
</organism>
<dbReference type="EC" id="4.2.3.4" evidence="1"/>
<dbReference type="EMBL" id="CP001287">
    <property type="protein sequence ID" value="ACK68113.1"/>
    <property type="molecule type" value="Genomic_DNA"/>
</dbReference>
<dbReference type="RefSeq" id="WP_015785162.1">
    <property type="nucleotide sequence ID" value="NC_011726.1"/>
</dbReference>
<dbReference type="SMR" id="B7K660"/>
<dbReference type="STRING" id="41431.PCC8801_4183"/>
<dbReference type="KEGG" id="cyp:PCC8801_4183"/>
<dbReference type="eggNOG" id="COG0337">
    <property type="taxonomic scope" value="Bacteria"/>
</dbReference>
<dbReference type="HOGENOM" id="CLU_001201_0_2_3"/>
<dbReference type="OrthoDB" id="9806583at2"/>
<dbReference type="UniPathway" id="UPA00053">
    <property type="reaction ID" value="UER00085"/>
</dbReference>
<dbReference type="Proteomes" id="UP000008204">
    <property type="component" value="Chromosome"/>
</dbReference>
<dbReference type="GO" id="GO:0005737">
    <property type="term" value="C:cytoplasm"/>
    <property type="evidence" value="ECO:0007669"/>
    <property type="project" value="UniProtKB-SubCell"/>
</dbReference>
<dbReference type="GO" id="GO:0003856">
    <property type="term" value="F:3-dehydroquinate synthase activity"/>
    <property type="evidence" value="ECO:0007669"/>
    <property type="project" value="UniProtKB-UniRule"/>
</dbReference>
<dbReference type="GO" id="GO:0046872">
    <property type="term" value="F:metal ion binding"/>
    <property type="evidence" value="ECO:0007669"/>
    <property type="project" value="UniProtKB-KW"/>
</dbReference>
<dbReference type="GO" id="GO:0000166">
    <property type="term" value="F:nucleotide binding"/>
    <property type="evidence" value="ECO:0007669"/>
    <property type="project" value="UniProtKB-KW"/>
</dbReference>
<dbReference type="GO" id="GO:0008652">
    <property type="term" value="P:amino acid biosynthetic process"/>
    <property type="evidence" value="ECO:0007669"/>
    <property type="project" value="UniProtKB-KW"/>
</dbReference>
<dbReference type="GO" id="GO:0009073">
    <property type="term" value="P:aromatic amino acid family biosynthetic process"/>
    <property type="evidence" value="ECO:0007669"/>
    <property type="project" value="UniProtKB-KW"/>
</dbReference>
<dbReference type="GO" id="GO:0009423">
    <property type="term" value="P:chorismate biosynthetic process"/>
    <property type="evidence" value="ECO:0007669"/>
    <property type="project" value="UniProtKB-UniRule"/>
</dbReference>
<dbReference type="CDD" id="cd08195">
    <property type="entry name" value="DHQS"/>
    <property type="match status" value="1"/>
</dbReference>
<dbReference type="FunFam" id="3.40.50.1970:FF:000001">
    <property type="entry name" value="3-dehydroquinate synthase"/>
    <property type="match status" value="1"/>
</dbReference>
<dbReference type="Gene3D" id="3.40.50.1970">
    <property type="match status" value="1"/>
</dbReference>
<dbReference type="Gene3D" id="1.20.1090.10">
    <property type="entry name" value="Dehydroquinate synthase-like - alpha domain"/>
    <property type="match status" value="1"/>
</dbReference>
<dbReference type="HAMAP" id="MF_00110">
    <property type="entry name" value="DHQ_synthase"/>
    <property type="match status" value="1"/>
</dbReference>
<dbReference type="InterPro" id="IPR050071">
    <property type="entry name" value="Dehydroquinate_synthase"/>
</dbReference>
<dbReference type="InterPro" id="IPR016037">
    <property type="entry name" value="DHQ_synth_AroB"/>
</dbReference>
<dbReference type="InterPro" id="IPR030963">
    <property type="entry name" value="DHQ_synth_fam"/>
</dbReference>
<dbReference type="InterPro" id="IPR030960">
    <property type="entry name" value="DHQS/DOIS_N"/>
</dbReference>
<dbReference type="InterPro" id="IPR056179">
    <property type="entry name" value="DHQS_C"/>
</dbReference>
<dbReference type="NCBIfam" id="TIGR01357">
    <property type="entry name" value="aroB"/>
    <property type="match status" value="1"/>
</dbReference>
<dbReference type="PANTHER" id="PTHR43622">
    <property type="entry name" value="3-DEHYDROQUINATE SYNTHASE"/>
    <property type="match status" value="1"/>
</dbReference>
<dbReference type="PANTHER" id="PTHR43622:SF7">
    <property type="entry name" value="3-DEHYDROQUINATE SYNTHASE, CHLOROPLASTIC"/>
    <property type="match status" value="1"/>
</dbReference>
<dbReference type="Pfam" id="PF01761">
    <property type="entry name" value="DHQ_synthase"/>
    <property type="match status" value="1"/>
</dbReference>
<dbReference type="Pfam" id="PF24621">
    <property type="entry name" value="DHQS_C"/>
    <property type="match status" value="1"/>
</dbReference>
<dbReference type="PIRSF" id="PIRSF001455">
    <property type="entry name" value="DHQ_synth"/>
    <property type="match status" value="1"/>
</dbReference>
<dbReference type="SUPFAM" id="SSF56796">
    <property type="entry name" value="Dehydroquinate synthase-like"/>
    <property type="match status" value="1"/>
</dbReference>
<comment type="function">
    <text evidence="1">Catalyzes the conversion of 3-deoxy-D-arabino-heptulosonate 7-phosphate (DAHP) to dehydroquinate (DHQ).</text>
</comment>
<comment type="catalytic activity">
    <reaction evidence="1">
        <text>7-phospho-2-dehydro-3-deoxy-D-arabino-heptonate = 3-dehydroquinate + phosphate</text>
        <dbReference type="Rhea" id="RHEA:21968"/>
        <dbReference type="ChEBI" id="CHEBI:32364"/>
        <dbReference type="ChEBI" id="CHEBI:43474"/>
        <dbReference type="ChEBI" id="CHEBI:58394"/>
        <dbReference type="EC" id="4.2.3.4"/>
    </reaction>
</comment>
<comment type="cofactor">
    <cofactor evidence="1">
        <name>Co(2+)</name>
        <dbReference type="ChEBI" id="CHEBI:48828"/>
    </cofactor>
    <cofactor evidence="1">
        <name>Zn(2+)</name>
        <dbReference type="ChEBI" id="CHEBI:29105"/>
    </cofactor>
    <text evidence="1">Binds 1 divalent metal cation per subunit. Can use either Co(2+) or Zn(2+).</text>
</comment>
<comment type="cofactor">
    <cofactor evidence="1">
        <name>NAD(+)</name>
        <dbReference type="ChEBI" id="CHEBI:57540"/>
    </cofactor>
</comment>
<comment type="pathway">
    <text evidence="1">Metabolic intermediate biosynthesis; chorismate biosynthesis; chorismate from D-erythrose 4-phosphate and phosphoenolpyruvate: step 2/7.</text>
</comment>
<comment type="subcellular location">
    <subcellularLocation>
        <location evidence="1">Cytoplasm</location>
    </subcellularLocation>
</comment>
<comment type="similarity">
    <text evidence="1">Belongs to the sugar phosphate cyclases superfamily. Dehydroquinate synthase family.</text>
</comment>
<keyword id="KW-0028">Amino-acid biosynthesis</keyword>
<keyword id="KW-0057">Aromatic amino acid biosynthesis</keyword>
<keyword id="KW-0170">Cobalt</keyword>
<keyword id="KW-0963">Cytoplasm</keyword>
<keyword id="KW-0456">Lyase</keyword>
<keyword id="KW-0479">Metal-binding</keyword>
<keyword id="KW-0520">NAD</keyword>
<keyword id="KW-0547">Nucleotide-binding</keyword>
<keyword id="KW-1185">Reference proteome</keyword>
<keyword id="KW-0862">Zinc</keyword>
<reference key="1">
    <citation type="journal article" date="2011" name="MBio">
        <title>Novel metabolic attributes of the genus Cyanothece, comprising a group of unicellular nitrogen-fixing Cyanobacteria.</title>
        <authorList>
            <person name="Bandyopadhyay A."/>
            <person name="Elvitigala T."/>
            <person name="Welsh E."/>
            <person name="Stockel J."/>
            <person name="Liberton M."/>
            <person name="Min H."/>
            <person name="Sherman L.A."/>
            <person name="Pakrasi H.B."/>
        </authorList>
    </citation>
    <scope>NUCLEOTIDE SEQUENCE [LARGE SCALE GENOMIC DNA]</scope>
    <source>
        <strain>PCC 8801 / RF-1</strain>
    </source>
</reference>
<gene>
    <name evidence="1" type="primary">aroB</name>
    <name type="ordered locus">PCC8801_4183</name>
</gene>
<proteinExistence type="inferred from homology"/>